<protein>
    <recommendedName>
        <fullName>Resistin-like beta</fullName>
    </recommendedName>
    <alternativeName>
        <fullName>Cysteine-rich secreted protein A12-beta</fullName>
    </alternativeName>
    <alternativeName>
        <fullName>Cysteine-rich secreted protein FIZZ2</fullName>
    </alternativeName>
    <alternativeName>
        <fullName>RELMbeta</fullName>
    </alternativeName>
</protein>
<accession>Q99P86</accession>
<accession>Q9D286</accession>
<dbReference type="EMBL" id="AF323083">
    <property type="protein sequence ID" value="AAG59826.1"/>
    <property type="molecule type" value="mRNA"/>
</dbReference>
<dbReference type="EMBL" id="AF290871">
    <property type="protein sequence ID" value="AAK83103.1"/>
    <property type="molecule type" value="mRNA"/>
</dbReference>
<dbReference type="EMBL" id="AK020240">
    <property type="protein sequence ID" value="BAB32036.1"/>
    <property type="molecule type" value="mRNA"/>
</dbReference>
<dbReference type="EMBL" id="BC022650">
    <property type="protein sequence ID" value="AAH22650.1"/>
    <property type="molecule type" value="mRNA"/>
</dbReference>
<dbReference type="CCDS" id="CCDS28210.1"/>
<dbReference type="RefSeq" id="NP_076370.3">
    <property type="nucleotide sequence ID" value="NM_023881.4"/>
</dbReference>
<dbReference type="PDB" id="1RH7">
    <property type="method" value="X-ray"/>
    <property type="resolution" value="3.11 A"/>
    <property type="chains" value="A/B/C/D/E/F=25-105"/>
</dbReference>
<dbReference type="PDBsum" id="1RH7"/>
<dbReference type="SMR" id="Q99P86"/>
<dbReference type="FunCoup" id="Q99P86">
    <property type="interactions" value="253"/>
</dbReference>
<dbReference type="STRING" id="10090.ENSMUSP00000023328"/>
<dbReference type="SwissPalm" id="Q99P86"/>
<dbReference type="PaxDb" id="10090-ENSMUSP00000023328"/>
<dbReference type="ProteomicsDB" id="253222"/>
<dbReference type="GeneID" id="57263"/>
<dbReference type="KEGG" id="mmu:57263"/>
<dbReference type="AGR" id="MGI:1888505"/>
<dbReference type="CTD" id="84666"/>
<dbReference type="MGI" id="MGI:1888505">
    <property type="gene designation" value="Retnlb"/>
</dbReference>
<dbReference type="eggNOG" id="ENOG502RTZZ">
    <property type="taxonomic scope" value="Eukaryota"/>
</dbReference>
<dbReference type="InParanoid" id="Q99P86"/>
<dbReference type="OrthoDB" id="10065422at2759"/>
<dbReference type="PhylomeDB" id="Q99P86"/>
<dbReference type="TreeFam" id="TF337024"/>
<dbReference type="BioGRID-ORCS" id="57263">
    <property type="hits" value="0 hits in 76 CRISPR screens"/>
</dbReference>
<dbReference type="EvolutionaryTrace" id="Q99P86"/>
<dbReference type="PRO" id="PR:Q99P86"/>
<dbReference type="Proteomes" id="UP000000589">
    <property type="component" value="Unplaced"/>
</dbReference>
<dbReference type="RNAct" id="Q99P86">
    <property type="molecule type" value="protein"/>
</dbReference>
<dbReference type="GO" id="GO:0005576">
    <property type="term" value="C:extracellular region"/>
    <property type="evidence" value="ECO:0000314"/>
    <property type="project" value="MGI"/>
</dbReference>
<dbReference type="GO" id="GO:0005179">
    <property type="term" value="F:hormone activity"/>
    <property type="evidence" value="ECO:0007669"/>
    <property type="project" value="UniProtKB-KW"/>
</dbReference>
<dbReference type="GO" id="GO:0009617">
    <property type="term" value="P:response to bacterium"/>
    <property type="evidence" value="ECO:0000270"/>
    <property type="project" value="MGI"/>
</dbReference>
<dbReference type="CDD" id="cd16333">
    <property type="entry name" value="RELM"/>
    <property type="match status" value="1"/>
</dbReference>
<dbReference type="FunFam" id="2.60.40.4230:FF:000001">
    <property type="entry name" value="Resistin-like beta"/>
    <property type="match status" value="1"/>
</dbReference>
<dbReference type="FunFam" id="6.10.250.3290:FF:000001">
    <property type="entry name" value="Resistin-like beta"/>
    <property type="match status" value="1"/>
</dbReference>
<dbReference type="Gene3D" id="6.10.250.3290">
    <property type="match status" value="1"/>
</dbReference>
<dbReference type="Gene3D" id="2.60.40.4230">
    <property type="entry name" value="Resistin head domain"/>
    <property type="match status" value="1"/>
</dbReference>
<dbReference type="InterPro" id="IPR009714">
    <property type="entry name" value="RELM"/>
</dbReference>
<dbReference type="InterPro" id="IPR036262">
    <property type="entry name" value="Resistin-like_sf"/>
</dbReference>
<dbReference type="PANTHER" id="PTHR21101">
    <property type="entry name" value="RESISTIN"/>
    <property type="match status" value="1"/>
</dbReference>
<dbReference type="PANTHER" id="PTHR21101:SF13">
    <property type="entry name" value="RESISTIN-LIKE BETA"/>
    <property type="match status" value="1"/>
</dbReference>
<dbReference type="Pfam" id="PF06954">
    <property type="entry name" value="Resistin"/>
    <property type="match status" value="1"/>
</dbReference>
<dbReference type="SUPFAM" id="SSF111423">
    <property type="entry name" value="Resistin"/>
    <property type="match status" value="1"/>
</dbReference>
<evidence type="ECO:0000255" key="1"/>
<evidence type="ECO:0000269" key="2">
    <source>
    </source>
</evidence>
<evidence type="ECO:0000269" key="3">
    <source>
    </source>
</evidence>
<evidence type="ECO:0000269" key="4">
    <source>
    </source>
</evidence>
<evidence type="ECO:0000269" key="5">
    <source>
    </source>
</evidence>
<evidence type="ECO:0000305" key="6"/>
<evidence type="ECO:0007744" key="7">
    <source>
        <dbReference type="PDB" id="1RH7"/>
    </source>
</evidence>
<evidence type="ECO:0007829" key="8">
    <source>
        <dbReference type="PDB" id="1RH7"/>
    </source>
</evidence>
<reference key="1">
    <citation type="journal article" date="2001" name="Proc. Natl. Acad. Sci. U.S.A.">
        <title>A family of tissue-specific resistin-like molecules.</title>
        <authorList>
            <person name="Steppan C.M."/>
            <person name="Brown E.J."/>
            <person name="Wright C.M."/>
            <person name="Bhat S."/>
            <person name="Banerjee R.R."/>
            <person name="Dai C.Y."/>
            <person name="Enders G.H."/>
            <person name="Silberg D.G."/>
            <person name="Wen X."/>
            <person name="Wu G.D."/>
            <person name="Lazar M.A."/>
        </authorList>
    </citation>
    <scope>NUCLEOTIDE SEQUENCE [MRNA]</scope>
    <scope>SUBCELLULAR LOCATION</scope>
    <scope>TISSUE SPECIFICITY</scope>
</reference>
<reference key="2">
    <citation type="submission" date="2000-07" db="EMBL/GenBank/DDBJ databases">
        <title>Identification of a novel cysteine-rich secreted A12-alpha related protein.</title>
        <authorList>
            <person name="Rajala M.W."/>
            <person name="Scherer P.E."/>
        </authorList>
    </citation>
    <scope>NUCLEOTIDE SEQUENCE [MRNA]</scope>
</reference>
<reference key="3">
    <citation type="journal article" date="2005" name="Science">
        <title>The transcriptional landscape of the mammalian genome.</title>
        <authorList>
            <person name="Carninci P."/>
            <person name="Kasukawa T."/>
            <person name="Katayama S."/>
            <person name="Gough J."/>
            <person name="Frith M.C."/>
            <person name="Maeda N."/>
            <person name="Oyama R."/>
            <person name="Ravasi T."/>
            <person name="Lenhard B."/>
            <person name="Wells C."/>
            <person name="Kodzius R."/>
            <person name="Shimokawa K."/>
            <person name="Bajic V.B."/>
            <person name="Brenner S.E."/>
            <person name="Batalov S."/>
            <person name="Forrest A.R."/>
            <person name="Zavolan M."/>
            <person name="Davis M.J."/>
            <person name="Wilming L.G."/>
            <person name="Aidinis V."/>
            <person name="Allen J.E."/>
            <person name="Ambesi-Impiombato A."/>
            <person name="Apweiler R."/>
            <person name="Aturaliya R.N."/>
            <person name="Bailey T.L."/>
            <person name="Bansal M."/>
            <person name="Baxter L."/>
            <person name="Beisel K.W."/>
            <person name="Bersano T."/>
            <person name="Bono H."/>
            <person name="Chalk A.M."/>
            <person name="Chiu K.P."/>
            <person name="Choudhary V."/>
            <person name="Christoffels A."/>
            <person name="Clutterbuck D.R."/>
            <person name="Crowe M.L."/>
            <person name="Dalla E."/>
            <person name="Dalrymple B.P."/>
            <person name="de Bono B."/>
            <person name="Della Gatta G."/>
            <person name="di Bernardo D."/>
            <person name="Down T."/>
            <person name="Engstrom P."/>
            <person name="Fagiolini M."/>
            <person name="Faulkner G."/>
            <person name="Fletcher C.F."/>
            <person name="Fukushima T."/>
            <person name="Furuno M."/>
            <person name="Futaki S."/>
            <person name="Gariboldi M."/>
            <person name="Georgii-Hemming P."/>
            <person name="Gingeras T.R."/>
            <person name="Gojobori T."/>
            <person name="Green R.E."/>
            <person name="Gustincich S."/>
            <person name="Harbers M."/>
            <person name="Hayashi Y."/>
            <person name="Hensch T.K."/>
            <person name="Hirokawa N."/>
            <person name="Hill D."/>
            <person name="Huminiecki L."/>
            <person name="Iacono M."/>
            <person name="Ikeo K."/>
            <person name="Iwama A."/>
            <person name="Ishikawa T."/>
            <person name="Jakt M."/>
            <person name="Kanapin A."/>
            <person name="Katoh M."/>
            <person name="Kawasawa Y."/>
            <person name="Kelso J."/>
            <person name="Kitamura H."/>
            <person name="Kitano H."/>
            <person name="Kollias G."/>
            <person name="Krishnan S.P."/>
            <person name="Kruger A."/>
            <person name="Kummerfeld S.K."/>
            <person name="Kurochkin I.V."/>
            <person name="Lareau L.F."/>
            <person name="Lazarevic D."/>
            <person name="Lipovich L."/>
            <person name="Liu J."/>
            <person name="Liuni S."/>
            <person name="McWilliam S."/>
            <person name="Madan Babu M."/>
            <person name="Madera M."/>
            <person name="Marchionni L."/>
            <person name="Matsuda H."/>
            <person name="Matsuzawa S."/>
            <person name="Miki H."/>
            <person name="Mignone F."/>
            <person name="Miyake S."/>
            <person name="Morris K."/>
            <person name="Mottagui-Tabar S."/>
            <person name="Mulder N."/>
            <person name="Nakano N."/>
            <person name="Nakauchi H."/>
            <person name="Ng P."/>
            <person name="Nilsson R."/>
            <person name="Nishiguchi S."/>
            <person name="Nishikawa S."/>
            <person name="Nori F."/>
            <person name="Ohara O."/>
            <person name="Okazaki Y."/>
            <person name="Orlando V."/>
            <person name="Pang K.C."/>
            <person name="Pavan W.J."/>
            <person name="Pavesi G."/>
            <person name="Pesole G."/>
            <person name="Petrovsky N."/>
            <person name="Piazza S."/>
            <person name="Reed J."/>
            <person name="Reid J.F."/>
            <person name="Ring B.Z."/>
            <person name="Ringwald M."/>
            <person name="Rost B."/>
            <person name="Ruan Y."/>
            <person name="Salzberg S.L."/>
            <person name="Sandelin A."/>
            <person name="Schneider C."/>
            <person name="Schoenbach C."/>
            <person name="Sekiguchi K."/>
            <person name="Semple C.A."/>
            <person name="Seno S."/>
            <person name="Sessa L."/>
            <person name="Sheng Y."/>
            <person name="Shibata Y."/>
            <person name="Shimada H."/>
            <person name="Shimada K."/>
            <person name="Silva D."/>
            <person name="Sinclair B."/>
            <person name="Sperling S."/>
            <person name="Stupka E."/>
            <person name="Sugiura K."/>
            <person name="Sultana R."/>
            <person name="Takenaka Y."/>
            <person name="Taki K."/>
            <person name="Tammoja K."/>
            <person name="Tan S.L."/>
            <person name="Tang S."/>
            <person name="Taylor M.S."/>
            <person name="Tegner J."/>
            <person name="Teichmann S.A."/>
            <person name="Ueda H.R."/>
            <person name="van Nimwegen E."/>
            <person name="Verardo R."/>
            <person name="Wei C.L."/>
            <person name="Yagi K."/>
            <person name="Yamanishi H."/>
            <person name="Zabarovsky E."/>
            <person name="Zhu S."/>
            <person name="Zimmer A."/>
            <person name="Hide W."/>
            <person name="Bult C."/>
            <person name="Grimmond S.M."/>
            <person name="Teasdale R.D."/>
            <person name="Liu E.T."/>
            <person name="Brusic V."/>
            <person name="Quackenbush J."/>
            <person name="Wahlestedt C."/>
            <person name="Mattick J.S."/>
            <person name="Hume D.A."/>
            <person name="Kai C."/>
            <person name="Sasaki D."/>
            <person name="Tomaru Y."/>
            <person name="Fukuda S."/>
            <person name="Kanamori-Katayama M."/>
            <person name="Suzuki M."/>
            <person name="Aoki J."/>
            <person name="Arakawa T."/>
            <person name="Iida J."/>
            <person name="Imamura K."/>
            <person name="Itoh M."/>
            <person name="Kato T."/>
            <person name="Kawaji H."/>
            <person name="Kawagashira N."/>
            <person name="Kawashima T."/>
            <person name="Kojima M."/>
            <person name="Kondo S."/>
            <person name="Konno H."/>
            <person name="Nakano K."/>
            <person name="Ninomiya N."/>
            <person name="Nishio T."/>
            <person name="Okada M."/>
            <person name="Plessy C."/>
            <person name="Shibata K."/>
            <person name="Shiraki T."/>
            <person name="Suzuki S."/>
            <person name="Tagami M."/>
            <person name="Waki K."/>
            <person name="Watahiki A."/>
            <person name="Okamura-Oho Y."/>
            <person name="Suzuki H."/>
            <person name="Kawai J."/>
            <person name="Hayashizaki Y."/>
        </authorList>
    </citation>
    <scope>NUCLEOTIDE SEQUENCE [LARGE SCALE MRNA]</scope>
    <source>
        <strain>C57BL/6J</strain>
        <tissue>Colon</tissue>
    </source>
</reference>
<reference key="4">
    <citation type="journal article" date="2004" name="Genome Res.">
        <title>The status, quality, and expansion of the NIH full-length cDNA project: the Mammalian Gene Collection (MGC).</title>
        <authorList>
            <consortium name="The MGC Project Team"/>
        </authorList>
    </citation>
    <scope>NUCLEOTIDE SEQUENCE [LARGE SCALE MRNA]</scope>
    <source>
        <strain>FVB/N</strain>
        <tissue>Colon</tissue>
    </source>
</reference>
<reference key="5">
    <citation type="journal article" date="2001" name="J. Biol. Chem.">
        <title>Dimerization of resistin and resistin-like molecules is determined by a single cysteine.</title>
        <authorList>
            <person name="Banerjee R.R."/>
            <person name="Lazar M.A."/>
        </authorList>
    </citation>
    <scope>SUBUNIT</scope>
    <scope>MUTAGENESIS OF CYS-25</scope>
</reference>
<reference key="6">
    <citation type="journal article" date="2005" name="Diabetologia">
        <title>Serum concentrations of resistin-like molecules beta and gamma are elevated in high-fat-fed and obese db/db mice, with increased production in the intestinal tract and bone marrow.</title>
        <authorList>
            <person name="Shojima N."/>
            <person name="Ogihara T."/>
            <person name="Inukai K."/>
            <person name="Fujishiro M."/>
            <person name="Sakoda H."/>
            <person name="Kushiyama A."/>
            <person name="Katagiri H."/>
            <person name="Anai M."/>
            <person name="Ono H."/>
            <person name="Fukushima Y."/>
            <person name="Horike N."/>
            <person name="Viana A.Y."/>
            <person name="Uchijima Y."/>
            <person name="Kurihara H."/>
            <person name="Asano T."/>
        </authorList>
    </citation>
    <scope>SUBUNIT</scope>
    <scope>TISSUE SPECIFICITY</scope>
    <scope>INDUCTION</scope>
</reference>
<reference key="7">
    <citation type="journal article" date="2004" name="Science">
        <title>Disulfide-dependent multimeric assembly of resistin family hormones.</title>
        <authorList>
            <person name="Patel S.D."/>
            <person name="Rajala M.W."/>
            <person name="Rossetti L."/>
            <person name="Scherer P.E."/>
            <person name="Shapiro L."/>
        </authorList>
    </citation>
    <scope>X-RAY CRYSTALLOGRAPHY (3.11 ANGSTROMS) OF 25-105</scope>
    <scope>DISULFIDE BONDS</scope>
</reference>
<proteinExistence type="evidence at protein level"/>
<keyword id="KW-0002">3D-structure</keyword>
<keyword id="KW-1015">Disulfide bond</keyword>
<keyword id="KW-0372">Hormone</keyword>
<keyword id="KW-1185">Reference proteome</keyword>
<keyword id="KW-0964">Secreted</keyword>
<keyword id="KW-0732">Signal</keyword>
<feature type="signal peptide" evidence="1">
    <location>
        <begin position="1"/>
        <end position="23"/>
    </location>
</feature>
<feature type="chain" id="PRO_0000030346" description="Resistin-like beta">
    <location>
        <begin position="24"/>
        <end position="105"/>
    </location>
</feature>
<feature type="disulfide bond" description="Interchain" evidence="3 4 7">
    <location>
        <position position="25"/>
    </location>
</feature>
<feature type="disulfide bond" evidence="4 7">
    <location>
        <begin position="49"/>
        <end position="102"/>
    </location>
</feature>
<feature type="disulfide bond" evidence="4 7">
    <location>
        <begin position="61"/>
        <end position="101"/>
    </location>
</feature>
<feature type="disulfide bond" evidence="4 7">
    <location>
        <begin position="70"/>
        <end position="87"/>
    </location>
</feature>
<feature type="disulfide bond" evidence="4 7">
    <location>
        <begin position="72"/>
        <end position="89"/>
    </location>
</feature>
<feature type="disulfide bond" evidence="4 7">
    <location>
        <begin position="76"/>
        <end position="91"/>
    </location>
</feature>
<feature type="mutagenesis site" description="Fails to homodimerize." evidence="3">
    <original>C</original>
    <variation>A</variation>
    <location>
        <position position="25"/>
    </location>
</feature>
<feature type="sequence conflict" description="In Ref. 3; BAB32036." evidence="6" ref="3">
    <original>F</original>
    <variation>L</variation>
    <location>
        <position position="15"/>
    </location>
</feature>
<feature type="sequence conflict" description="In Ref. 2; AAK83103." evidence="6" ref="2">
    <original>A</original>
    <variation>V</variation>
    <location>
        <position position="105"/>
    </location>
</feature>
<feature type="helix" evidence="8">
    <location>
        <begin position="29"/>
        <end position="35"/>
    </location>
</feature>
<feature type="turn" evidence="8">
    <location>
        <begin position="36"/>
        <end position="38"/>
    </location>
</feature>
<feature type="strand" evidence="8">
    <location>
        <begin position="46"/>
        <end position="60"/>
    </location>
</feature>
<feature type="strand" evidence="8">
    <location>
        <begin position="66"/>
        <end position="72"/>
    </location>
</feature>
<feature type="helix" evidence="8">
    <location>
        <begin position="73"/>
        <end position="75"/>
    </location>
</feature>
<feature type="strand" evidence="8">
    <location>
        <begin position="79"/>
        <end position="82"/>
    </location>
</feature>
<feature type="turn" evidence="8">
    <location>
        <begin position="83"/>
        <end position="85"/>
    </location>
</feature>
<feature type="strand" evidence="8">
    <location>
        <begin position="86"/>
        <end position="89"/>
    </location>
</feature>
<feature type="strand" evidence="8">
    <location>
        <begin position="91"/>
        <end position="93"/>
    </location>
</feature>
<feature type="strand" evidence="8">
    <location>
        <begin position="96"/>
        <end position="105"/>
    </location>
</feature>
<sequence>MKPTLCFLFILVSLFPLIVPGNAQCSFESLVDQRIKEALSRQEPKTISCTSVTSSGRLASCPAGMVVTGCACGYGCGSWDIRNGNTCHCQCSVMDWASARCCRMA</sequence>
<organism>
    <name type="scientific">Mus musculus</name>
    <name type="common">Mouse</name>
    <dbReference type="NCBI Taxonomy" id="10090"/>
    <lineage>
        <taxon>Eukaryota</taxon>
        <taxon>Metazoa</taxon>
        <taxon>Chordata</taxon>
        <taxon>Craniata</taxon>
        <taxon>Vertebrata</taxon>
        <taxon>Euteleostomi</taxon>
        <taxon>Mammalia</taxon>
        <taxon>Eutheria</taxon>
        <taxon>Euarchontoglires</taxon>
        <taxon>Glires</taxon>
        <taxon>Rodentia</taxon>
        <taxon>Myomorpha</taxon>
        <taxon>Muroidea</taxon>
        <taxon>Muridae</taxon>
        <taxon>Murinae</taxon>
        <taxon>Mus</taxon>
        <taxon>Mus</taxon>
    </lineage>
</organism>
<gene>
    <name type="primary">Retnlb</name>
    <name type="synonym">Fizz2</name>
</gene>
<comment type="function">
    <text>Probable hormone.</text>
</comment>
<comment type="subunit">
    <text evidence="3 4 5">Homodimer; disulfide-linked (PubMed:11358969, PubMed:15155948, PubMed:15834545). Heterodimer with RETNLG (PubMed:15834545).</text>
</comment>
<comment type="subcellular location">
    <subcellularLocation>
        <location evidence="2">Secreted</location>
    </subcellularLocation>
</comment>
<comment type="tissue specificity">
    <text evidence="2 5">Strongly expressed in colon, and at lower levels in ileum (PubMed:15834545). In colon, found throughout the crypt and surface epithelium and in goblet cells (at protein level) (PubMed:15834545). Specific to the gastrointestinal tract; not detected in other tissues tested (PubMed:11209052, PubMed:15834545).</text>
</comment>
<comment type="induction">
    <text evidence="5">Up-regulated in colon in response to a high-fat diet. Also up-regulated in obese mice mutant for the leptin receptor LEPR (db/db genotype).</text>
</comment>
<comment type="similarity">
    <text evidence="6">Belongs to the resistin/FIZZ family.</text>
</comment>
<name>RETNB_MOUSE</name>